<keyword id="KW-0648">Protein biosynthesis</keyword>
<keyword id="KW-1185">Reference proteome</keyword>
<keyword id="KW-0808">Transferase</keyword>
<name>FMT_ACIC1</name>
<reference key="1">
    <citation type="journal article" date="2009" name="Genome Res.">
        <title>Complete genome of the cellulolytic thermophile Acidothermus cellulolyticus 11B provides insights into its ecophysiological and evolutionary adaptations.</title>
        <authorList>
            <person name="Barabote R.D."/>
            <person name="Xie G."/>
            <person name="Leu D.H."/>
            <person name="Normand P."/>
            <person name="Necsulea A."/>
            <person name="Daubin V."/>
            <person name="Medigue C."/>
            <person name="Adney W.S."/>
            <person name="Xu X.C."/>
            <person name="Lapidus A."/>
            <person name="Parales R.E."/>
            <person name="Detter C."/>
            <person name="Pujic P."/>
            <person name="Bruce D."/>
            <person name="Lavire C."/>
            <person name="Challacombe J.F."/>
            <person name="Brettin T.S."/>
            <person name="Berry A.M."/>
        </authorList>
    </citation>
    <scope>NUCLEOTIDE SEQUENCE [LARGE SCALE GENOMIC DNA]</scope>
    <source>
        <strain>ATCC 43068 / DSM 8971 / 11B</strain>
    </source>
</reference>
<organism>
    <name type="scientific">Acidothermus cellulolyticus (strain ATCC 43068 / DSM 8971 / 11B)</name>
    <dbReference type="NCBI Taxonomy" id="351607"/>
    <lineage>
        <taxon>Bacteria</taxon>
        <taxon>Bacillati</taxon>
        <taxon>Actinomycetota</taxon>
        <taxon>Actinomycetes</taxon>
        <taxon>Acidothermales</taxon>
        <taxon>Acidothermaceae</taxon>
        <taxon>Acidothermus</taxon>
    </lineage>
</organism>
<proteinExistence type="inferred from homology"/>
<sequence>MRLLFAGTPQTALPSLRLLLESSHEVVAVLTRPDAPAGRGRTPRPSPVALAAEQAGLPVLKPRRLADPETLAALRSLNAELAVVVAYGALVPEPALAIPRHGWVNLHFSILPSWRGAAPVQHAILHGDEVTGATTFRLEPDLDTGPIYGTVTEPIRPDDTAGDLLNRLARTGARLLLDTVDGIAAGVLAPRPQPTEGVSYAPKITPADARISWSSPAFHVDRLIRAVTPEPGAWTTLAGRRIVLGPVRLAEPQHAPGATDDGSLAPGEIRVLAPGEIRVERDRVLVGTATTPVILGTVQPAGRRAMPAEAWARGARLAPGARFE</sequence>
<gene>
    <name evidence="1" type="primary">fmt</name>
    <name type="ordered locus">Acel_1278</name>
</gene>
<protein>
    <recommendedName>
        <fullName evidence="1">Methionyl-tRNA formyltransferase</fullName>
        <ecNumber evidence="1">2.1.2.9</ecNumber>
    </recommendedName>
</protein>
<accession>A0LUE0</accession>
<feature type="chain" id="PRO_1000020008" description="Methionyl-tRNA formyltransferase">
    <location>
        <begin position="1"/>
        <end position="324"/>
    </location>
</feature>
<feature type="binding site" evidence="1">
    <location>
        <begin position="109"/>
        <end position="112"/>
    </location>
    <ligand>
        <name>(6S)-5,6,7,8-tetrahydrofolate</name>
        <dbReference type="ChEBI" id="CHEBI:57453"/>
    </ligand>
</feature>
<dbReference type="EC" id="2.1.2.9" evidence="1"/>
<dbReference type="EMBL" id="CP000481">
    <property type="protein sequence ID" value="ABK53050.1"/>
    <property type="molecule type" value="Genomic_DNA"/>
</dbReference>
<dbReference type="RefSeq" id="WP_011720113.1">
    <property type="nucleotide sequence ID" value="NC_008578.1"/>
</dbReference>
<dbReference type="SMR" id="A0LUE0"/>
<dbReference type="FunCoup" id="A0LUE0">
    <property type="interactions" value="260"/>
</dbReference>
<dbReference type="STRING" id="351607.Acel_1278"/>
<dbReference type="KEGG" id="ace:Acel_1278"/>
<dbReference type="eggNOG" id="COG0223">
    <property type="taxonomic scope" value="Bacteria"/>
</dbReference>
<dbReference type="HOGENOM" id="CLU_033347_1_0_11"/>
<dbReference type="InParanoid" id="A0LUE0"/>
<dbReference type="OrthoDB" id="9802815at2"/>
<dbReference type="Proteomes" id="UP000008221">
    <property type="component" value="Chromosome"/>
</dbReference>
<dbReference type="GO" id="GO:0005829">
    <property type="term" value="C:cytosol"/>
    <property type="evidence" value="ECO:0007669"/>
    <property type="project" value="TreeGrafter"/>
</dbReference>
<dbReference type="GO" id="GO:0004479">
    <property type="term" value="F:methionyl-tRNA formyltransferase activity"/>
    <property type="evidence" value="ECO:0007669"/>
    <property type="project" value="UniProtKB-UniRule"/>
</dbReference>
<dbReference type="CDD" id="cd08646">
    <property type="entry name" value="FMT_core_Met-tRNA-FMT_N"/>
    <property type="match status" value="1"/>
</dbReference>
<dbReference type="CDD" id="cd08704">
    <property type="entry name" value="Met_tRNA_FMT_C"/>
    <property type="match status" value="1"/>
</dbReference>
<dbReference type="FunFam" id="3.40.50.12230:FF:000001">
    <property type="entry name" value="Methionyl-tRNA formyltransferase"/>
    <property type="match status" value="1"/>
</dbReference>
<dbReference type="Gene3D" id="3.40.50.12230">
    <property type="match status" value="1"/>
</dbReference>
<dbReference type="HAMAP" id="MF_00182">
    <property type="entry name" value="Formyl_trans"/>
    <property type="match status" value="1"/>
</dbReference>
<dbReference type="InterPro" id="IPR005794">
    <property type="entry name" value="Fmt"/>
</dbReference>
<dbReference type="InterPro" id="IPR005793">
    <property type="entry name" value="Formyl_trans_C"/>
</dbReference>
<dbReference type="InterPro" id="IPR002376">
    <property type="entry name" value="Formyl_transf_N"/>
</dbReference>
<dbReference type="InterPro" id="IPR036477">
    <property type="entry name" value="Formyl_transf_N_sf"/>
</dbReference>
<dbReference type="InterPro" id="IPR011034">
    <property type="entry name" value="Formyl_transferase-like_C_sf"/>
</dbReference>
<dbReference type="InterPro" id="IPR044135">
    <property type="entry name" value="Met-tRNA-FMT_C"/>
</dbReference>
<dbReference type="InterPro" id="IPR041711">
    <property type="entry name" value="Met-tRNA-FMT_N"/>
</dbReference>
<dbReference type="NCBIfam" id="TIGR00460">
    <property type="entry name" value="fmt"/>
    <property type="match status" value="1"/>
</dbReference>
<dbReference type="PANTHER" id="PTHR11138">
    <property type="entry name" value="METHIONYL-TRNA FORMYLTRANSFERASE"/>
    <property type="match status" value="1"/>
</dbReference>
<dbReference type="PANTHER" id="PTHR11138:SF5">
    <property type="entry name" value="METHIONYL-TRNA FORMYLTRANSFERASE, MITOCHONDRIAL"/>
    <property type="match status" value="1"/>
</dbReference>
<dbReference type="Pfam" id="PF02911">
    <property type="entry name" value="Formyl_trans_C"/>
    <property type="match status" value="1"/>
</dbReference>
<dbReference type="Pfam" id="PF00551">
    <property type="entry name" value="Formyl_trans_N"/>
    <property type="match status" value="1"/>
</dbReference>
<dbReference type="SUPFAM" id="SSF50486">
    <property type="entry name" value="FMT C-terminal domain-like"/>
    <property type="match status" value="1"/>
</dbReference>
<dbReference type="SUPFAM" id="SSF53328">
    <property type="entry name" value="Formyltransferase"/>
    <property type="match status" value="1"/>
</dbReference>
<evidence type="ECO:0000255" key="1">
    <source>
        <dbReference type="HAMAP-Rule" id="MF_00182"/>
    </source>
</evidence>
<comment type="function">
    <text evidence="1">Attaches a formyl group to the free amino group of methionyl-tRNA(fMet). The formyl group appears to play a dual role in the initiator identity of N-formylmethionyl-tRNA by promoting its recognition by IF2 and preventing the misappropriation of this tRNA by the elongation apparatus.</text>
</comment>
<comment type="catalytic activity">
    <reaction evidence="1">
        <text>L-methionyl-tRNA(fMet) + (6R)-10-formyltetrahydrofolate = N-formyl-L-methionyl-tRNA(fMet) + (6S)-5,6,7,8-tetrahydrofolate + H(+)</text>
        <dbReference type="Rhea" id="RHEA:24380"/>
        <dbReference type="Rhea" id="RHEA-COMP:9952"/>
        <dbReference type="Rhea" id="RHEA-COMP:9953"/>
        <dbReference type="ChEBI" id="CHEBI:15378"/>
        <dbReference type="ChEBI" id="CHEBI:57453"/>
        <dbReference type="ChEBI" id="CHEBI:78530"/>
        <dbReference type="ChEBI" id="CHEBI:78844"/>
        <dbReference type="ChEBI" id="CHEBI:195366"/>
        <dbReference type="EC" id="2.1.2.9"/>
    </reaction>
</comment>
<comment type="similarity">
    <text evidence="1">Belongs to the Fmt family.</text>
</comment>